<feature type="chain" id="PRO_1000055073" description="ATP synthase subunit alpha">
    <location>
        <begin position="1"/>
        <end position="505"/>
    </location>
</feature>
<feature type="binding site" evidence="1">
    <location>
        <begin position="171"/>
        <end position="178"/>
    </location>
    <ligand>
        <name>ATP</name>
        <dbReference type="ChEBI" id="CHEBI:30616"/>
    </ligand>
</feature>
<feature type="site" description="Required for activity" evidence="1">
    <location>
        <position position="364"/>
    </location>
</feature>
<gene>
    <name evidence="1" type="primary">atpA</name>
    <name type="ordered locus">NIS_1222</name>
</gene>
<name>ATPA_NITSB</name>
<keyword id="KW-0066">ATP synthesis</keyword>
<keyword id="KW-0067">ATP-binding</keyword>
<keyword id="KW-0997">Cell inner membrane</keyword>
<keyword id="KW-1003">Cell membrane</keyword>
<keyword id="KW-0139">CF(1)</keyword>
<keyword id="KW-0375">Hydrogen ion transport</keyword>
<keyword id="KW-0406">Ion transport</keyword>
<keyword id="KW-0472">Membrane</keyword>
<keyword id="KW-0547">Nucleotide-binding</keyword>
<keyword id="KW-1185">Reference proteome</keyword>
<keyword id="KW-1278">Translocase</keyword>
<keyword id="KW-0813">Transport</keyword>
<evidence type="ECO:0000255" key="1">
    <source>
        <dbReference type="HAMAP-Rule" id="MF_01346"/>
    </source>
</evidence>
<protein>
    <recommendedName>
        <fullName evidence="1">ATP synthase subunit alpha</fullName>
        <ecNumber evidence="1">7.1.2.2</ecNumber>
    </recommendedName>
    <alternativeName>
        <fullName evidence="1">ATP synthase F1 sector subunit alpha</fullName>
    </alternativeName>
    <alternativeName>
        <fullName evidence="1">F-ATPase subunit alpha</fullName>
    </alternativeName>
</protein>
<dbReference type="EC" id="7.1.2.2" evidence="1"/>
<dbReference type="EMBL" id="AP009178">
    <property type="protein sequence ID" value="BAF70331.1"/>
    <property type="molecule type" value="Genomic_DNA"/>
</dbReference>
<dbReference type="RefSeq" id="WP_012082594.1">
    <property type="nucleotide sequence ID" value="NC_009662.1"/>
</dbReference>
<dbReference type="SMR" id="A6Q4C2"/>
<dbReference type="FunCoup" id="A6Q4C2">
    <property type="interactions" value="334"/>
</dbReference>
<dbReference type="STRING" id="387092.NIS_1222"/>
<dbReference type="KEGG" id="nis:NIS_1222"/>
<dbReference type="eggNOG" id="COG0056">
    <property type="taxonomic scope" value="Bacteria"/>
</dbReference>
<dbReference type="HOGENOM" id="CLU_010091_2_1_7"/>
<dbReference type="InParanoid" id="A6Q4C2"/>
<dbReference type="OrthoDB" id="9803053at2"/>
<dbReference type="Proteomes" id="UP000001118">
    <property type="component" value="Chromosome"/>
</dbReference>
<dbReference type="GO" id="GO:0005886">
    <property type="term" value="C:plasma membrane"/>
    <property type="evidence" value="ECO:0007669"/>
    <property type="project" value="UniProtKB-SubCell"/>
</dbReference>
<dbReference type="GO" id="GO:0045259">
    <property type="term" value="C:proton-transporting ATP synthase complex"/>
    <property type="evidence" value="ECO:0007669"/>
    <property type="project" value="UniProtKB-KW"/>
</dbReference>
<dbReference type="GO" id="GO:0043531">
    <property type="term" value="F:ADP binding"/>
    <property type="evidence" value="ECO:0007669"/>
    <property type="project" value="TreeGrafter"/>
</dbReference>
<dbReference type="GO" id="GO:0005524">
    <property type="term" value="F:ATP binding"/>
    <property type="evidence" value="ECO:0007669"/>
    <property type="project" value="UniProtKB-UniRule"/>
</dbReference>
<dbReference type="GO" id="GO:0046933">
    <property type="term" value="F:proton-transporting ATP synthase activity, rotational mechanism"/>
    <property type="evidence" value="ECO:0007669"/>
    <property type="project" value="UniProtKB-UniRule"/>
</dbReference>
<dbReference type="CDD" id="cd18113">
    <property type="entry name" value="ATP-synt_F1_alpha_C"/>
    <property type="match status" value="1"/>
</dbReference>
<dbReference type="CDD" id="cd18116">
    <property type="entry name" value="ATP-synt_F1_alpha_N"/>
    <property type="match status" value="1"/>
</dbReference>
<dbReference type="CDD" id="cd01132">
    <property type="entry name" value="F1-ATPase_alpha_CD"/>
    <property type="match status" value="1"/>
</dbReference>
<dbReference type="FunFam" id="1.20.150.20:FF:000001">
    <property type="entry name" value="ATP synthase subunit alpha"/>
    <property type="match status" value="1"/>
</dbReference>
<dbReference type="FunFam" id="2.40.30.20:FF:000001">
    <property type="entry name" value="ATP synthase subunit alpha"/>
    <property type="match status" value="1"/>
</dbReference>
<dbReference type="FunFam" id="3.40.50.300:FF:000002">
    <property type="entry name" value="ATP synthase subunit alpha"/>
    <property type="match status" value="1"/>
</dbReference>
<dbReference type="Gene3D" id="2.40.30.20">
    <property type="match status" value="1"/>
</dbReference>
<dbReference type="Gene3D" id="1.20.150.20">
    <property type="entry name" value="ATP synthase alpha/beta chain, C-terminal domain"/>
    <property type="match status" value="1"/>
</dbReference>
<dbReference type="Gene3D" id="3.40.50.300">
    <property type="entry name" value="P-loop containing nucleotide triphosphate hydrolases"/>
    <property type="match status" value="1"/>
</dbReference>
<dbReference type="HAMAP" id="MF_01346">
    <property type="entry name" value="ATP_synth_alpha_bact"/>
    <property type="match status" value="1"/>
</dbReference>
<dbReference type="InterPro" id="IPR023366">
    <property type="entry name" value="ATP_synth_asu-like_sf"/>
</dbReference>
<dbReference type="InterPro" id="IPR000793">
    <property type="entry name" value="ATP_synth_asu_C"/>
</dbReference>
<dbReference type="InterPro" id="IPR038376">
    <property type="entry name" value="ATP_synth_asu_C_sf"/>
</dbReference>
<dbReference type="InterPro" id="IPR033732">
    <property type="entry name" value="ATP_synth_F1_a_nt-bd_dom"/>
</dbReference>
<dbReference type="InterPro" id="IPR005294">
    <property type="entry name" value="ATP_synth_F1_asu"/>
</dbReference>
<dbReference type="InterPro" id="IPR020003">
    <property type="entry name" value="ATPase_a/bsu_AS"/>
</dbReference>
<dbReference type="InterPro" id="IPR004100">
    <property type="entry name" value="ATPase_F1/V1/A1_a/bsu_N"/>
</dbReference>
<dbReference type="InterPro" id="IPR036121">
    <property type="entry name" value="ATPase_F1/V1/A1_a/bsu_N_sf"/>
</dbReference>
<dbReference type="InterPro" id="IPR000194">
    <property type="entry name" value="ATPase_F1/V1/A1_a/bsu_nucl-bd"/>
</dbReference>
<dbReference type="InterPro" id="IPR027417">
    <property type="entry name" value="P-loop_NTPase"/>
</dbReference>
<dbReference type="NCBIfam" id="TIGR00962">
    <property type="entry name" value="atpA"/>
    <property type="match status" value="1"/>
</dbReference>
<dbReference type="NCBIfam" id="NF009884">
    <property type="entry name" value="PRK13343.1"/>
    <property type="match status" value="1"/>
</dbReference>
<dbReference type="PANTHER" id="PTHR48082">
    <property type="entry name" value="ATP SYNTHASE SUBUNIT ALPHA, MITOCHONDRIAL"/>
    <property type="match status" value="1"/>
</dbReference>
<dbReference type="PANTHER" id="PTHR48082:SF2">
    <property type="entry name" value="ATP SYNTHASE SUBUNIT ALPHA, MITOCHONDRIAL"/>
    <property type="match status" value="1"/>
</dbReference>
<dbReference type="Pfam" id="PF00006">
    <property type="entry name" value="ATP-synt_ab"/>
    <property type="match status" value="1"/>
</dbReference>
<dbReference type="Pfam" id="PF00306">
    <property type="entry name" value="ATP-synt_ab_C"/>
    <property type="match status" value="1"/>
</dbReference>
<dbReference type="Pfam" id="PF02874">
    <property type="entry name" value="ATP-synt_ab_N"/>
    <property type="match status" value="1"/>
</dbReference>
<dbReference type="PIRSF" id="PIRSF039088">
    <property type="entry name" value="F_ATPase_subunit_alpha"/>
    <property type="match status" value="1"/>
</dbReference>
<dbReference type="SUPFAM" id="SSF47917">
    <property type="entry name" value="C-terminal domain of alpha and beta subunits of F1 ATP synthase"/>
    <property type="match status" value="1"/>
</dbReference>
<dbReference type="SUPFAM" id="SSF50615">
    <property type="entry name" value="N-terminal domain of alpha and beta subunits of F1 ATP synthase"/>
    <property type="match status" value="1"/>
</dbReference>
<dbReference type="SUPFAM" id="SSF52540">
    <property type="entry name" value="P-loop containing nucleoside triphosphate hydrolases"/>
    <property type="match status" value="1"/>
</dbReference>
<dbReference type="PROSITE" id="PS00152">
    <property type="entry name" value="ATPASE_ALPHA_BETA"/>
    <property type="match status" value="1"/>
</dbReference>
<organism>
    <name type="scientific">Nitratiruptor sp. (strain SB155-2)</name>
    <dbReference type="NCBI Taxonomy" id="387092"/>
    <lineage>
        <taxon>Bacteria</taxon>
        <taxon>Pseudomonadati</taxon>
        <taxon>Campylobacterota</taxon>
        <taxon>Epsilonproteobacteria</taxon>
        <taxon>Nautiliales</taxon>
        <taxon>Nitratiruptoraceae</taxon>
        <taxon>Nitratiruptor</taxon>
    </lineage>
</organism>
<reference key="1">
    <citation type="journal article" date="2007" name="Proc. Natl. Acad. Sci. U.S.A.">
        <title>Deep-sea vent epsilon-proteobacterial genomes provide insights into emergence of pathogens.</title>
        <authorList>
            <person name="Nakagawa S."/>
            <person name="Takaki Y."/>
            <person name="Shimamura S."/>
            <person name="Reysenbach A.-L."/>
            <person name="Takai K."/>
            <person name="Horikoshi K."/>
        </authorList>
    </citation>
    <scope>NUCLEOTIDE SEQUENCE [LARGE SCALE GENOMIC DNA]</scope>
    <source>
        <strain>SB155-2</strain>
    </source>
</reference>
<sequence>MAQKLQADEISSIIKERIEDFELKIDVEETGKVISFGDGVAKVFGLNNVMAGEMLEFDNGDKGMALNLEETNVGVVVLGRGEGIREGSSVKRLGQLLKAPVGEALVGRVINAIGEPIDGKGPIEATEYRYVEEKAPGIMARKSVHEPLQTGIKAIDALVPIGRGQRELIIGDRQTGKTTVAIDTIINQKGQDVVCIYVAVGQKQSTVAQVVKKLEEHGAMDYTIVVNAGASEPAALQFLAPYTGVTIGEYFRDNGKHALIVYDDLSKHAVAYREMSLILRRPPGREAYPGDVFYLHSRLLERAAKLNDKLGAGSLTALPIIETQAGDVSAYIPTNVISITDGQIFLESDLFNAGIRPAINVGISVSRVGGAAQIKAMKQVAGTLRLDLAQYRELEAFAQFASDLDEASRKQLERGMRMVEILKQPPYSPLPVEKQVVIIYAGANGFLDDIEVSAIGKFEYELYSFIEAKYPQIFELIRERKALDDEIKELLNKAIEEFKASFSAE</sequence>
<proteinExistence type="inferred from homology"/>
<accession>A6Q4C2</accession>
<comment type="function">
    <text evidence="1">Produces ATP from ADP in the presence of a proton gradient across the membrane. The alpha chain is a regulatory subunit.</text>
</comment>
<comment type="catalytic activity">
    <reaction evidence="1">
        <text>ATP + H2O + 4 H(+)(in) = ADP + phosphate + 5 H(+)(out)</text>
        <dbReference type="Rhea" id="RHEA:57720"/>
        <dbReference type="ChEBI" id="CHEBI:15377"/>
        <dbReference type="ChEBI" id="CHEBI:15378"/>
        <dbReference type="ChEBI" id="CHEBI:30616"/>
        <dbReference type="ChEBI" id="CHEBI:43474"/>
        <dbReference type="ChEBI" id="CHEBI:456216"/>
        <dbReference type="EC" id="7.1.2.2"/>
    </reaction>
</comment>
<comment type="subunit">
    <text evidence="1">F-type ATPases have 2 components, CF(1) - the catalytic core - and CF(0) - the membrane proton channel. CF(1) has five subunits: alpha(3), beta(3), gamma(1), delta(1), epsilon(1). CF(0) has three main subunits: a(1), b(2) and c(9-12). The alpha and beta chains form an alternating ring which encloses part of the gamma chain. CF(1) is attached to CF(0) by a central stalk formed by the gamma and epsilon chains, while a peripheral stalk is formed by the delta and b chains.</text>
</comment>
<comment type="subcellular location">
    <subcellularLocation>
        <location evidence="1">Cell inner membrane</location>
        <topology evidence="1">Peripheral membrane protein</topology>
    </subcellularLocation>
</comment>
<comment type="similarity">
    <text evidence="1">Belongs to the ATPase alpha/beta chains family.</text>
</comment>